<protein>
    <recommendedName>
        <fullName evidence="1">Large ribosomal subunit protein uL29</fullName>
    </recommendedName>
    <alternativeName>
        <fullName evidence="2">50S ribosomal protein L29</fullName>
    </alternativeName>
</protein>
<feature type="chain" id="PRO_1000121754" description="Large ribosomal subunit protein uL29">
    <location>
        <begin position="1"/>
        <end position="65"/>
    </location>
</feature>
<evidence type="ECO:0000255" key="1">
    <source>
        <dbReference type="HAMAP-Rule" id="MF_00374"/>
    </source>
</evidence>
<evidence type="ECO:0000305" key="2"/>
<comment type="similarity">
    <text evidence="1">Belongs to the universal ribosomal protein uL29 family.</text>
</comment>
<proteinExistence type="inferred from homology"/>
<dbReference type="EMBL" id="CP001020">
    <property type="protein sequence ID" value="ACJ19724.1"/>
    <property type="molecule type" value="Genomic_DNA"/>
</dbReference>
<dbReference type="RefSeq" id="WP_005771530.1">
    <property type="nucleotide sequence ID" value="NC_011528.1"/>
</dbReference>
<dbReference type="SMR" id="B6J5E0"/>
<dbReference type="KEGG" id="cbc:CbuK_0441"/>
<dbReference type="HOGENOM" id="CLU_158491_1_2_6"/>
<dbReference type="GO" id="GO:0022625">
    <property type="term" value="C:cytosolic large ribosomal subunit"/>
    <property type="evidence" value="ECO:0007669"/>
    <property type="project" value="TreeGrafter"/>
</dbReference>
<dbReference type="GO" id="GO:0003735">
    <property type="term" value="F:structural constituent of ribosome"/>
    <property type="evidence" value="ECO:0007669"/>
    <property type="project" value="InterPro"/>
</dbReference>
<dbReference type="GO" id="GO:0006412">
    <property type="term" value="P:translation"/>
    <property type="evidence" value="ECO:0007669"/>
    <property type="project" value="UniProtKB-UniRule"/>
</dbReference>
<dbReference type="CDD" id="cd00427">
    <property type="entry name" value="Ribosomal_L29_HIP"/>
    <property type="match status" value="1"/>
</dbReference>
<dbReference type="FunFam" id="1.10.287.310:FF:000001">
    <property type="entry name" value="50S ribosomal protein L29"/>
    <property type="match status" value="1"/>
</dbReference>
<dbReference type="Gene3D" id="1.10.287.310">
    <property type="match status" value="1"/>
</dbReference>
<dbReference type="HAMAP" id="MF_00374">
    <property type="entry name" value="Ribosomal_uL29"/>
    <property type="match status" value="1"/>
</dbReference>
<dbReference type="InterPro" id="IPR050063">
    <property type="entry name" value="Ribosomal_protein_uL29"/>
</dbReference>
<dbReference type="InterPro" id="IPR001854">
    <property type="entry name" value="Ribosomal_uL29"/>
</dbReference>
<dbReference type="InterPro" id="IPR036049">
    <property type="entry name" value="Ribosomal_uL29_sf"/>
</dbReference>
<dbReference type="NCBIfam" id="TIGR00012">
    <property type="entry name" value="L29"/>
    <property type="match status" value="1"/>
</dbReference>
<dbReference type="PANTHER" id="PTHR10916">
    <property type="entry name" value="60S RIBOSOMAL PROTEIN L35/50S RIBOSOMAL PROTEIN L29"/>
    <property type="match status" value="1"/>
</dbReference>
<dbReference type="PANTHER" id="PTHR10916:SF0">
    <property type="entry name" value="LARGE RIBOSOMAL SUBUNIT PROTEIN UL29C"/>
    <property type="match status" value="1"/>
</dbReference>
<dbReference type="Pfam" id="PF00831">
    <property type="entry name" value="Ribosomal_L29"/>
    <property type="match status" value="1"/>
</dbReference>
<dbReference type="SUPFAM" id="SSF46561">
    <property type="entry name" value="Ribosomal protein L29 (L29p)"/>
    <property type="match status" value="1"/>
</dbReference>
<gene>
    <name evidence="1" type="primary">rpmC</name>
    <name type="ordered locus">CbuK_0441</name>
</gene>
<organism>
    <name type="scientific">Coxiella burnetii (strain CbuK_Q154)</name>
    <name type="common">Coxiella burnetii (strain Q154)</name>
    <dbReference type="NCBI Taxonomy" id="434924"/>
    <lineage>
        <taxon>Bacteria</taxon>
        <taxon>Pseudomonadati</taxon>
        <taxon>Pseudomonadota</taxon>
        <taxon>Gammaproteobacteria</taxon>
        <taxon>Legionellales</taxon>
        <taxon>Coxiellaceae</taxon>
        <taxon>Coxiella</taxon>
    </lineage>
</organism>
<sequence>MNVNDLRNKTKAELKKELLELLKEQFNLRMQKGGGEAPRPHLFKRVRRDIARVKTLLGEKERNNE</sequence>
<accession>B6J5E0</accession>
<name>RL29_COXB1</name>
<reference key="1">
    <citation type="journal article" date="2009" name="Infect. Immun.">
        <title>Comparative genomics reveal extensive transposon-mediated genomic plasticity and diversity among potential effector proteins within the genus Coxiella.</title>
        <authorList>
            <person name="Beare P.A."/>
            <person name="Unsworth N."/>
            <person name="Andoh M."/>
            <person name="Voth D.E."/>
            <person name="Omsland A."/>
            <person name="Gilk S.D."/>
            <person name="Williams K.P."/>
            <person name="Sobral B.W."/>
            <person name="Kupko J.J. III"/>
            <person name="Porcella S.F."/>
            <person name="Samuel J.E."/>
            <person name="Heinzen R.A."/>
        </authorList>
    </citation>
    <scope>NUCLEOTIDE SEQUENCE [LARGE SCALE GENOMIC DNA]</scope>
    <source>
        <strain>CbuK_Q154</strain>
    </source>
</reference>
<keyword id="KW-0687">Ribonucleoprotein</keyword>
<keyword id="KW-0689">Ribosomal protein</keyword>